<dbReference type="EMBL" id="L42023">
    <property type="protein sequence ID" value="AAC23210.1"/>
    <property type="molecule type" value="Genomic_DNA"/>
</dbReference>
<dbReference type="PIR" id="I64035">
    <property type="entry name" value="I64035"/>
</dbReference>
<dbReference type="RefSeq" id="NP_439701.1">
    <property type="nucleotide sequence ID" value="NC_000907.1"/>
</dbReference>
<dbReference type="PDB" id="5GNG">
    <property type="method" value="X-ray"/>
    <property type="resolution" value="1.26 A"/>
    <property type="chains" value="A/B=1-215"/>
</dbReference>
<dbReference type="PDB" id="5H3B">
    <property type="method" value="X-ray"/>
    <property type="resolution" value="1.49 A"/>
    <property type="chains" value="A/B=1-215"/>
</dbReference>
<dbReference type="PDBsum" id="5GNG"/>
<dbReference type="PDBsum" id="5H3B"/>
<dbReference type="SMR" id="P44251"/>
<dbReference type="STRING" id="71421.HI_1552"/>
<dbReference type="ESTHER" id="haein-y1552">
    <property type="family name" value="BioG_Pimeloyl-ACP-methyl-esterase"/>
</dbReference>
<dbReference type="EnsemblBacteria" id="AAC23210">
    <property type="protein sequence ID" value="AAC23210"/>
    <property type="gene ID" value="HI_1552"/>
</dbReference>
<dbReference type="KEGG" id="hin:HI_1552"/>
<dbReference type="PATRIC" id="fig|71421.8.peg.1623"/>
<dbReference type="eggNOG" id="COG2830">
    <property type="taxonomic scope" value="Bacteria"/>
</dbReference>
<dbReference type="HOGENOM" id="CLU_085983_0_1_6"/>
<dbReference type="OrthoDB" id="7688089at2"/>
<dbReference type="BioCyc" id="HINF71421:G1GJ1-1572-MONOMER"/>
<dbReference type="BioCyc" id="MetaCyc:MONOMER-17845"/>
<dbReference type="BRENDA" id="3.1.1.85">
    <property type="organism ID" value="2529"/>
</dbReference>
<dbReference type="Proteomes" id="UP000000579">
    <property type="component" value="Chromosome"/>
</dbReference>
<dbReference type="InterPro" id="IPR007398">
    <property type="entry name" value="BioG"/>
</dbReference>
<dbReference type="Pfam" id="PF04301">
    <property type="entry name" value="BioG"/>
    <property type="match status" value="1"/>
</dbReference>
<protein>
    <recommendedName>
        <fullName>Uncharacterized protein HI_1552</fullName>
    </recommendedName>
</protein>
<feature type="chain" id="PRO_0000078084" description="Uncharacterized protein HI_1552">
    <location>
        <begin position="1"/>
        <end position="215"/>
    </location>
</feature>
<feature type="strand" evidence="1">
    <location>
        <begin position="2"/>
        <end position="6"/>
    </location>
</feature>
<feature type="strand" evidence="1">
    <location>
        <begin position="11"/>
        <end position="17"/>
    </location>
</feature>
<feature type="helix" evidence="1">
    <location>
        <begin position="24"/>
        <end position="27"/>
    </location>
</feature>
<feature type="strand" evidence="1">
    <location>
        <begin position="36"/>
        <end position="42"/>
    </location>
</feature>
<feature type="strand" evidence="1">
    <location>
        <begin position="45"/>
        <end position="47"/>
    </location>
</feature>
<feature type="strand" evidence="1">
    <location>
        <begin position="59"/>
        <end position="64"/>
    </location>
</feature>
<feature type="helix" evidence="1">
    <location>
        <begin position="67"/>
        <end position="74"/>
    </location>
</feature>
<feature type="turn" evidence="1">
    <location>
        <begin position="75"/>
        <end position="77"/>
    </location>
</feature>
<feature type="strand" evidence="1">
    <location>
        <begin position="81"/>
        <end position="87"/>
    </location>
</feature>
<feature type="turn" evidence="1">
    <location>
        <begin position="95"/>
        <end position="97"/>
    </location>
</feature>
<feature type="helix" evidence="1">
    <location>
        <begin position="101"/>
        <end position="109"/>
    </location>
</feature>
<feature type="helix" evidence="1">
    <location>
        <begin position="113"/>
        <end position="124"/>
    </location>
</feature>
<feature type="helix" evidence="1">
    <location>
        <begin position="127"/>
        <end position="133"/>
    </location>
</feature>
<feature type="helix" evidence="1">
    <location>
        <begin position="141"/>
        <end position="157"/>
    </location>
</feature>
<feature type="strand" evidence="1">
    <location>
        <begin position="167"/>
        <end position="172"/>
    </location>
</feature>
<feature type="strand" evidence="1">
    <location>
        <begin position="176"/>
        <end position="178"/>
    </location>
</feature>
<feature type="helix" evidence="1">
    <location>
        <begin position="180"/>
        <end position="187"/>
    </location>
</feature>
<feature type="turn" evidence="1">
    <location>
        <begin position="188"/>
        <end position="190"/>
    </location>
</feature>
<feature type="strand" evidence="1">
    <location>
        <begin position="191"/>
        <end position="198"/>
    </location>
</feature>
<feature type="helix" evidence="1">
    <location>
        <begin position="203"/>
        <end position="205"/>
    </location>
</feature>
<feature type="helix" evidence="1">
    <location>
        <begin position="209"/>
        <end position="212"/>
    </location>
</feature>
<reference key="1">
    <citation type="journal article" date="1995" name="Science">
        <title>Whole-genome random sequencing and assembly of Haemophilus influenzae Rd.</title>
        <authorList>
            <person name="Fleischmann R.D."/>
            <person name="Adams M.D."/>
            <person name="White O."/>
            <person name="Clayton R.A."/>
            <person name="Kirkness E.F."/>
            <person name="Kerlavage A.R."/>
            <person name="Bult C.J."/>
            <person name="Tomb J.-F."/>
            <person name="Dougherty B.A."/>
            <person name="Merrick J.M."/>
            <person name="McKenney K."/>
            <person name="Sutton G.G."/>
            <person name="FitzHugh W."/>
            <person name="Fields C.A."/>
            <person name="Gocayne J.D."/>
            <person name="Scott J.D."/>
            <person name="Shirley R."/>
            <person name="Liu L.-I."/>
            <person name="Glodek A."/>
            <person name="Kelley J.M."/>
            <person name="Weidman J.F."/>
            <person name="Phillips C.A."/>
            <person name="Spriggs T."/>
            <person name="Hedblom E."/>
            <person name="Cotton M.D."/>
            <person name="Utterback T.R."/>
            <person name="Hanna M.C."/>
            <person name="Nguyen D.T."/>
            <person name="Saudek D.M."/>
            <person name="Brandon R.C."/>
            <person name="Fine L.D."/>
            <person name="Fritchman J.L."/>
            <person name="Fuhrmann J.L."/>
            <person name="Geoghagen N.S.M."/>
            <person name="Gnehm C.L."/>
            <person name="McDonald L.A."/>
            <person name="Small K.V."/>
            <person name="Fraser C.M."/>
            <person name="Smith H.O."/>
            <person name="Venter J.C."/>
        </authorList>
    </citation>
    <scope>NUCLEOTIDE SEQUENCE [LARGE SCALE GENOMIC DNA]</scope>
    <source>
        <strain>ATCC 51907 / DSM 11121 / KW20 / Rd</strain>
    </source>
</reference>
<name>Y1552_HAEIN</name>
<gene>
    <name type="ordered locus">HI_1552</name>
</gene>
<evidence type="ECO:0007829" key="1">
    <source>
        <dbReference type="PDB" id="5GNG"/>
    </source>
</evidence>
<proteinExistence type="evidence at protein level"/>
<keyword id="KW-0002">3D-structure</keyword>
<keyword id="KW-1185">Reference proteome</keyword>
<organism>
    <name type="scientific">Haemophilus influenzae (strain ATCC 51907 / DSM 11121 / KW20 / Rd)</name>
    <dbReference type="NCBI Taxonomy" id="71421"/>
    <lineage>
        <taxon>Bacteria</taxon>
        <taxon>Pseudomonadati</taxon>
        <taxon>Pseudomonadota</taxon>
        <taxon>Gammaproteobacteria</taxon>
        <taxon>Pasteurellales</taxon>
        <taxon>Pasteurellaceae</taxon>
        <taxon>Haemophilus</taxon>
    </lineage>
</organism>
<sequence>MKTKFYDYQGEHLILYFAGWGTPPDAVNHLILPENHDLLICYDYQDLNLDFDLSAYRHIRLVAWSMGVWVAERVLQGIRLKSATAVNGTGLPCDDSFGIPYAIFKGTLENLTENTRLKFERRICGDKASFERYQLFPARPFDEIHQELTALFAMIQQDKRIDLIHWANAWVSSRDKIFTPANQHQYWALRCAVQEIEGEHYVFSRFTHWSALWDH</sequence>
<accession>P44251</accession>